<protein>
    <recommendedName>
        <fullName evidence="1">Large ribosomal subunit protein uL1</fullName>
    </recommendedName>
    <alternativeName>
        <fullName evidence="2">50S ribosomal protein L1</fullName>
    </alternativeName>
</protein>
<feature type="chain" id="PRO_1000141484" description="Large ribosomal subunit protein uL1">
    <location>
        <begin position="1"/>
        <end position="232"/>
    </location>
</feature>
<gene>
    <name evidence="1" type="primary">rplA</name>
    <name type="ordered locus">XfasM23_2110</name>
</gene>
<comment type="function">
    <text evidence="1">Binds directly to 23S rRNA. The L1 stalk is quite mobile in the ribosome, and is involved in E site tRNA release.</text>
</comment>
<comment type="function">
    <text evidence="1">Protein L1 is also a translational repressor protein, it controls the translation of the L11 operon by binding to its mRNA.</text>
</comment>
<comment type="subunit">
    <text evidence="1">Part of the 50S ribosomal subunit.</text>
</comment>
<comment type="similarity">
    <text evidence="1">Belongs to the universal ribosomal protein uL1 family.</text>
</comment>
<dbReference type="EMBL" id="CP001011">
    <property type="protein sequence ID" value="ACB93508.1"/>
    <property type="molecule type" value="Genomic_DNA"/>
</dbReference>
<dbReference type="RefSeq" id="WP_004090730.1">
    <property type="nucleotide sequence ID" value="NC_010577.1"/>
</dbReference>
<dbReference type="SMR" id="B2IA72"/>
<dbReference type="GeneID" id="93905865"/>
<dbReference type="KEGG" id="xfn:XfasM23_2110"/>
<dbReference type="HOGENOM" id="CLU_062853_0_0_6"/>
<dbReference type="Proteomes" id="UP000001698">
    <property type="component" value="Chromosome"/>
</dbReference>
<dbReference type="GO" id="GO:0022625">
    <property type="term" value="C:cytosolic large ribosomal subunit"/>
    <property type="evidence" value="ECO:0007669"/>
    <property type="project" value="TreeGrafter"/>
</dbReference>
<dbReference type="GO" id="GO:0019843">
    <property type="term" value="F:rRNA binding"/>
    <property type="evidence" value="ECO:0007669"/>
    <property type="project" value="UniProtKB-UniRule"/>
</dbReference>
<dbReference type="GO" id="GO:0003735">
    <property type="term" value="F:structural constituent of ribosome"/>
    <property type="evidence" value="ECO:0007669"/>
    <property type="project" value="InterPro"/>
</dbReference>
<dbReference type="GO" id="GO:0000049">
    <property type="term" value="F:tRNA binding"/>
    <property type="evidence" value="ECO:0007669"/>
    <property type="project" value="UniProtKB-KW"/>
</dbReference>
<dbReference type="GO" id="GO:0006417">
    <property type="term" value="P:regulation of translation"/>
    <property type="evidence" value="ECO:0007669"/>
    <property type="project" value="UniProtKB-KW"/>
</dbReference>
<dbReference type="GO" id="GO:0006412">
    <property type="term" value="P:translation"/>
    <property type="evidence" value="ECO:0007669"/>
    <property type="project" value="UniProtKB-UniRule"/>
</dbReference>
<dbReference type="CDD" id="cd00403">
    <property type="entry name" value="Ribosomal_L1"/>
    <property type="match status" value="1"/>
</dbReference>
<dbReference type="FunFam" id="3.40.50.790:FF:000001">
    <property type="entry name" value="50S ribosomal protein L1"/>
    <property type="match status" value="1"/>
</dbReference>
<dbReference type="Gene3D" id="3.30.190.20">
    <property type="match status" value="1"/>
</dbReference>
<dbReference type="Gene3D" id="3.40.50.790">
    <property type="match status" value="1"/>
</dbReference>
<dbReference type="HAMAP" id="MF_01318_B">
    <property type="entry name" value="Ribosomal_uL1_B"/>
    <property type="match status" value="1"/>
</dbReference>
<dbReference type="InterPro" id="IPR005878">
    <property type="entry name" value="Ribosom_uL1_bac-type"/>
</dbReference>
<dbReference type="InterPro" id="IPR002143">
    <property type="entry name" value="Ribosomal_uL1"/>
</dbReference>
<dbReference type="InterPro" id="IPR023674">
    <property type="entry name" value="Ribosomal_uL1-like"/>
</dbReference>
<dbReference type="InterPro" id="IPR028364">
    <property type="entry name" value="Ribosomal_uL1/biogenesis"/>
</dbReference>
<dbReference type="InterPro" id="IPR016095">
    <property type="entry name" value="Ribosomal_uL1_3-a/b-sand"/>
</dbReference>
<dbReference type="InterPro" id="IPR023673">
    <property type="entry name" value="Ribosomal_uL1_CS"/>
</dbReference>
<dbReference type="NCBIfam" id="TIGR01169">
    <property type="entry name" value="rplA_bact"/>
    <property type="match status" value="1"/>
</dbReference>
<dbReference type="PANTHER" id="PTHR36427">
    <property type="entry name" value="54S RIBOSOMAL PROTEIN L1, MITOCHONDRIAL"/>
    <property type="match status" value="1"/>
</dbReference>
<dbReference type="PANTHER" id="PTHR36427:SF3">
    <property type="entry name" value="LARGE RIBOSOMAL SUBUNIT PROTEIN UL1M"/>
    <property type="match status" value="1"/>
</dbReference>
<dbReference type="Pfam" id="PF00687">
    <property type="entry name" value="Ribosomal_L1"/>
    <property type="match status" value="1"/>
</dbReference>
<dbReference type="PIRSF" id="PIRSF002155">
    <property type="entry name" value="Ribosomal_L1"/>
    <property type="match status" value="1"/>
</dbReference>
<dbReference type="SUPFAM" id="SSF56808">
    <property type="entry name" value="Ribosomal protein L1"/>
    <property type="match status" value="1"/>
</dbReference>
<dbReference type="PROSITE" id="PS01199">
    <property type="entry name" value="RIBOSOMAL_L1"/>
    <property type="match status" value="1"/>
</dbReference>
<accession>B2IA72</accession>
<sequence length="232" mass="24378">MVQTKRQKAIDIAVVPGKAYGIDEAIKILKTATKAKFIESVDVAIRLGVDVKKSDQQVRGSTLLPAGTGRDVRVAVFVPSGAKAEDALAAGADAVGMDDLAEKMQAGDLNYDVVIATPDAMRVVGKLGTLLGPRGLMPNPKVGTVSQNPGEAVKNAKSGQVRYRADKAGIIHCVIGKVNFDDEALKLNLQALLVDLIKIKPTASKGTYLQKVSLSSTMGPGVMIDQSTLSLK</sequence>
<name>RL1_XYLF2</name>
<proteinExistence type="inferred from homology"/>
<organism>
    <name type="scientific">Xylella fastidiosa (strain M23)</name>
    <dbReference type="NCBI Taxonomy" id="405441"/>
    <lineage>
        <taxon>Bacteria</taxon>
        <taxon>Pseudomonadati</taxon>
        <taxon>Pseudomonadota</taxon>
        <taxon>Gammaproteobacteria</taxon>
        <taxon>Lysobacterales</taxon>
        <taxon>Lysobacteraceae</taxon>
        <taxon>Xylella</taxon>
    </lineage>
</organism>
<keyword id="KW-0678">Repressor</keyword>
<keyword id="KW-0687">Ribonucleoprotein</keyword>
<keyword id="KW-0689">Ribosomal protein</keyword>
<keyword id="KW-0694">RNA-binding</keyword>
<keyword id="KW-0699">rRNA-binding</keyword>
<keyword id="KW-0810">Translation regulation</keyword>
<keyword id="KW-0820">tRNA-binding</keyword>
<evidence type="ECO:0000255" key="1">
    <source>
        <dbReference type="HAMAP-Rule" id="MF_01318"/>
    </source>
</evidence>
<evidence type="ECO:0000305" key="2"/>
<reference key="1">
    <citation type="journal article" date="2010" name="J. Bacteriol.">
        <title>Whole genome sequences of two Xylella fastidiosa strains (M12 and M23) causing almond leaf scorch disease in California.</title>
        <authorList>
            <person name="Chen J."/>
            <person name="Xie G."/>
            <person name="Han S."/>
            <person name="Chertkov O."/>
            <person name="Sims D."/>
            <person name="Civerolo E.L."/>
        </authorList>
    </citation>
    <scope>NUCLEOTIDE SEQUENCE [LARGE SCALE GENOMIC DNA]</scope>
    <source>
        <strain>M23</strain>
    </source>
</reference>